<protein>
    <recommendedName>
        <fullName evidence="1">Glutamate--tRNA ligase 1</fullName>
        <ecNumber evidence="1">6.1.1.17</ecNumber>
    </recommendedName>
    <alternativeName>
        <fullName evidence="1">Glutamyl-tRNA synthetase 1</fullName>
        <shortName evidence="1">GluRS 1</shortName>
    </alternativeName>
</protein>
<keyword id="KW-0030">Aminoacyl-tRNA synthetase</keyword>
<keyword id="KW-0067">ATP-binding</keyword>
<keyword id="KW-0963">Cytoplasm</keyword>
<keyword id="KW-0436">Ligase</keyword>
<keyword id="KW-0547">Nucleotide-binding</keyword>
<keyword id="KW-0648">Protein biosynthesis</keyword>
<proteinExistence type="inferred from homology"/>
<name>SYE1_RHILO</name>
<comment type="function">
    <text evidence="1">Catalyzes the attachment of glutamate to tRNA(Glu) in a two-step reaction: glutamate is first activated by ATP to form Glu-AMP and then transferred to the acceptor end of tRNA(Glu).</text>
</comment>
<comment type="catalytic activity">
    <reaction evidence="1">
        <text>tRNA(Glu) + L-glutamate + ATP = L-glutamyl-tRNA(Glu) + AMP + diphosphate</text>
        <dbReference type="Rhea" id="RHEA:23540"/>
        <dbReference type="Rhea" id="RHEA-COMP:9663"/>
        <dbReference type="Rhea" id="RHEA-COMP:9680"/>
        <dbReference type="ChEBI" id="CHEBI:29985"/>
        <dbReference type="ChEBI" id="CHEBI:30616"/>
        <dbReference type="ChEBI" id="CHEBI:33019"/>
        <dbReference type="ChEBI" id="CHEBI:78442"/>
        <dbReference type="ChEBI" id="CHEBI:78520"/>
        <dbReference type="ChEBI" id="CHEBI:456215"/>
        <dbReference type="EC" id="6.1.1.17"/>
    </reaction>
</comment>
<comment type="subunit">
    <text evidence="1">Monomer.</text>
</comment>
<comment type="subcellular location">
    <subcellularLocation>
        <location evidence="1">Cytoplasm</location>
    </subcellularLocation>
</comment>
<comment type="similarity">
    <text evidence="1">Belongs to the class-I aminoacyl-tRNA synthetase family. Glutamate--tRNA ligase type 1 subfamily.</text>
</comment>
<organism>
    <name type="scientific">Mesorhizobium japonicum (strain LMG 29417 / CECT 9101 / MAFF 303099)</name>
    <name type="common">Mesorhizobium loti (strain MAFF 303099)</name>
    <dbReference type="NCBI Taxonomy" id="266835"/>
    <lineage>
        <taxon>Bacteria</taxon>
        <taxon>Pseudomonadati</taxon>
        <taxon>Pseudomonadota</taxon>
        <taxon>Alphaproteobacteria</taxon>
        <taxon>Hyphomicrobiales</taxon>
        <taxon>Phyllobacteriaceae</taxon>
        <taxon>Mesorhizobium</taxon>
    </lineage>
</organism>
<gene>
    <name evidence="1" type="primary">gltX1</name>
    <name type="ordered locus">mlr0628</name>
</gene>
<sequence>MSDKVVTRFAPSPTGYLHIGGARTALFNWLYAKHTGGTMLLRIEDTDRERSTAAATAAILDGLSWLGLGWDGDAVSQFERAPRHREVAEELVRMGKAYYSYETPAELEAMREAARAKGLPPRYNGQWRDRTPSEAPAGVKGAIRIKAPTEGETIVHDRVQGEVRFPNKDLDDFIILRSDGNPTYMHAVVVDDHDMGVTHIIRGDDHLTNAARQTVIYNAMGWDVPSMSHIPLIHGADGAKLSKRHGALGVEAYRAMGYLPEALLNYLARLGWSHGDDEIMSIKDMISWFDIGDVNKGAARFDFAKLEAINGAHMRRMADAQLLDIFIATLPYLEGGPAMAARLNEHNKAQLLAALPGLKERAKTLVELVDGAAFLFATRPLPVDEKAALLLNDGARKILRGAHEALNALSGDWTAAAAEAAVRDYALAGGHKLGAVAQPLRAALTGKSTSPGVFDVLAVLGREESLARIADQID</sequence>
<reference key="1">
    <citation type="journal article" date="2000" name="DNA Res.">
        <title>Complete genome structure of the nitrogen-fixing symbiotic bacterium Mesorhizobium loti.</title>
        <authorList>
            <person name="Kaneko T."/>
            <person name="Nakamura Y."/>
            <person name="Sato S."/>
            <person name="Asamizu E."/>
            <person name="Kato T."/>
            <person name="Sasamoto S."/>
            <person name="Watanabe A."/>
            <person name="Idesawa K."/>
            <person name="Ishikawa A."/>
            <person name="Kawashima K."/>
            <person name="Kimura T."/>
            <person name="Kishida Y."/>
            <person name="Kiyokawa C."/>
            <person name="Kohara M."/>
            <person name="Matsumoto M."/>
            <person name="Matsuno A."/>
            <person name="Mochizuki Y."/>
            <person name="Nakayama S."/>
            <person name="Nakazaki N."/>
            <person name="Shimpo S."/>
            <person name="Sugimoto M."/>
            <person name="Takeuchi C."/>
            <person name="Yamada M."/>
            <person name="Tabata S."/>
        </authorList>
    </citation>
    <scope>NUCLEOTIDE SEQUENCE [LARGE SCALE GENOMIC DNA]</scope>
    <source>
        <strain>LMG 29417 / CECT 9101 / MAFF 303099</strain>
    </source>
</reference>
<dbReference type="EC" id="6.1.1.17" evidence="1"/>
<dbReference type="EMBL" id="BA000012">
    <property type="protein sequence ID" value="BAB48183.1"/>
    <property type="molecule type" value="Genomic_DNA"/>
</dbReference>
<dbReference type="RefSeq" id="WP_010909538.1">
    <property type="nucleotide sequence ID" value="NC_002678.2"/>
</dbReference>
<dbReference type="SMR" id="Q98MD0"/>
<dbReference type="KEGG" id="mlo:mlr0628"/>
<dbReference type="PATRIC" id="fig|266835.9.peg.505"/>
<dbReference type="eggNOG" id="COG0008">
    <property type="taxonomic scope" value="Bacteria"/>
</dbReference>
<dbReference type="HOGENOM" id="CLU_015768_6_0_5"/>
<dbReference type="Proteomes" id="UP000000552">
    <property type="component" value="Chromosome"/>
</dbReference>
<dbReference type="GO" id="GO:0005829">
    <property type="term" value="C:cytosol"/>
    <property type="evidence" value="ECO:0007669"/>
    <property type="project" value="TreeGrafter"/>
</dbReference>
<dbReference type="GO" id="GO:0005524">
    <property type="term" value="F:ATP binding"/>
    <property type="evidence" value="ECO:0007669"/>
    <property type="project" value="UniProtKB-UniRule"/>
</dbReference>
<dbReference type="GO" id="GO:0004818">
    <property type="term" value="F:glutamate-tRNA ligase activity"/>
    <property type="evidence" value="ECO:0007669"/>
    <property type="project" value="UniProtKB-UniRule"/>
</dbReference>
<dbReference type="GO" id="GO:0000049">
    <property type="term" value="F:tRNA binding"/>
    <property type="evidence" value="ECO:0007669"/>
    <property type="project" value="InterPro"/>
</dbReference>
<dbReference type="GO" id="GO:0008270">
    <property type="term" value="F:zinc ion binding"/>
    <property type="evidence" value="ECO:0007669"/>
    <property type="project" value="InterPro"/>
</dbReference>
<dbReference type="GO" id="GO:0006424">
    <property type="term" value="P:glutamyl-tRNA aminoacylation"/>
    <property type="evidence" value="ECO:0007669"/>
    <property type="project" value="UniProtKB-UniRule"/>
</dbReference>
<dbReference type="CDD" id="cd00808">
    <property type="entry name" value="GluRS_core"/>
    <property type="match status" value="1"/>
</dbReference>
<dbReference type="FunFam" id="3.40.50.620:FF:000007">
    <property type="entry name" value="Glutamate--tRNA ligase"/>
    <property type="match status" value="1"/>
</dbReference>
<dbReference type="Gene3D" id="1.10.10.350">
    <property type="match status" value="1"/>
</dbReference>
<dbReference type="Gene3D" id="3.40.50.620">
    <property type="entry name" value="HUPs"/>
    <property type="match status" value="1"/>
</dbReference>
<dbReference type="HAMAP" id="MF_00022">
    <property type="entry name" value="Glu_tRNA_synth_type1"/>
    <property type="match status" value="1"/>
</dbReference>
<dbReference type="InterPro" id="IPR045462">
    <property type="entry name" value="aa-tRNA-synth_I_cd-bd"/>
</dbReference>
<dbReference type="InterPro" id="IPR020751">
    <property type="entry name" value="aa-tRNA-synth_I_codon-bd_sub2"/>
</dbReference>
<dbReference type="InterPro" id="IPR001412">
    <property type="entry name" value="aa-tRNA-synth_I_CS"/>
</dbReference>
<dbReference type="InterPro" id="IPR008925">
    <property type="entry name" value="aa_tRNA-synth_I_cd-bd_sf"/>
</dbReference>
<dbReference type="InterPro" id="IPR004527">
    <property type="entry name" value="Glu-tRNA-ligase_bac/mito"/>
</dbReference>
<dbReference type="InterPro" id="IPR000924">
    <property type="entry name" value="Glu/Gln-tRNA-synth"/>
</dbReference>
<dbReference type="InterPro" id="IPR020058">
    <property type="entry name" value="Glu/Gln-tRNA-synth_Ib_cat-dom"/>
</dbReference>
<dbReference type="InterPro" id="IPR049940">
    <property type="entry name" value="GluQ/Sye"/>
</dbReference>
<dbReference type="InterPro" id="IPR033910">
    <property type="entry name" value="GluRS_core"/>
</dbReference>
<dbReference type="InterPro" id="IPR014729">
    <property type="entry name" value="Rossmann-like_a/b/a_fold"/>
</dbReference>
<dbReference type="NCBIfam" id="TIGR00464">
    <property type="entry name" value="gltX_bact"/>
    <property type="match status" value="1"/>
</dbReference>
<dbReference type="PANTHER" id="PTHR43311">
    <property type="entry name" value="GLUTAMATE--TRNA LIGASE"/>
    <property type="match status" value="1"/>
</dbReference>
<dbReference type="PANTHER" id="PTHR43311:SF2">
    <property type="entry name" value="GLUTAMATE--TRNA LIGASE, MITOCHONDRIAL-RELATED"/>
    <property type="match status" value="1"/>
</dbReference>
<dbReference type="Pfam" id="PF19269">
    <property type="entry name" value="Anticodon_2"/>
    <property type="match status" value="1"/>
</dbReference>
<dbReference type="Pfam" id="PF00749">
    <property type="entry name" value="tRNA-synt_1c"/>
    <property type="match status" value="1"/>
</dbReference>
<dbReference type="PRINTS" id="PR00987">
    <property type="entry name" value="TRNASYNTHGLU"/>
</dbReference>
<dbReference type="SUPFAM" id="SSF48163">
    <property type="entry name" value="An anticodon-binding domain of class I aminoacyl-tRNA synthetases"/>
    <property type="match status" value="1"/>
</dbReference>
<dbReference type="SUPFAM" id="SSF52374">
    <property type="entry name" value="Nucleotidylyl transferase"/>
    <property type="match status" value="1"/>
</dbReference>
<dbReference type="PROSITE" id="PS00178">
    <property type="entry name" value="AA_TRNA_LIGASE_I"/>
    <property type="match status" value="1"/>
</dbReference>
<accession>Q98MD0</accession>
<evidence type="ECO:0000255" key="1">
    <source>
        <dbReference type="HAMAP-Rule" id="MF_00022"/>
    </source>
</evidence>
<feature type="chain" id="PRO_0000119631" description="Glutamate--tRNA ligase 1">
    <location>
        <begin position="1"/>
        <end position="474"/>
    </location>
</feature>
<feature type="short sequence motif" description="'HIGH' region" evidence="1">
    <location>
        <begin position="11"/>
        <end position="21"/>
    </location>
</feature>
<feature type="short sequence motif" description="'KMSKS' region" evidence="1">
    <location>
        <begin position="240"/>
        <end position="244"/>
    </location>
</feature>
<feature type="binding site" evidence="1">
    <location>
        <position position="243"/>
    </location>
    <ligand>
        <name>ATP</name>
        <dbReference type="ChEBI" id="CHEBI:30616"/>
    </ligand>
</feature>